<gene>
    <name evidence="1" type="primary">lexA</name>
    <name type="ordered locus">Bcen_1120</name>
</gene>
<organism>
    <name type="scientific">Burkholderia orbicola (strain AU 1054)</name>
    <dbReference type="NCBI Taxonomy" id="331271"/>
    <lineage>
        <taxon>Bacteria</taxon>
        <taxon>Pseudomonadati</taxon>
        <taxon>Pseudomonadota</taxon>
        <taxon>Betaproteobacteria</taxon>
        <taxon>Burkholderiales</taxon>
        <taxon>Burkholderiaceae</taxon>
        <taxon>Burkholderia</taxon>
        <taxon>Burkholderia cepacia complex</taxon>
        <taxon>Burkholderia orbicola</taxon>
    </lineage>
</organism>
<proteinExistence type="inferred from homology"/>
<feature type="chain" id="PRO_1000001265" description="LexA repressor">
    <location>
        <begin position="1"/>
        <end position="215"/>
    </location>
</feature>
<feature type="DNA-binding region" description="H-T-H motif" evidence="1">
    <location>
        <begin position="28"/>
        <end position="48"/>
    </location>
</feature>
<feature type="active site" description="For autocatalytic cleavage activity" evidence="1">
    <location>
        <position position="133"/>
    </location>
</feature>
<feature type="active site" description="For autocatalytic cleavage activity" evidence="1">
    <location>
        <position position="170"/>
    </location>
</feature>
<feature type="site" description="Cleavage; by autolysis" evidence="1">
    <location>
        <begin position="98"/>
        <end position="99"/>
    </location>
</feature>
<sequence length="215" mass="23180">MTKLTARQQQVFDLIRRAIERSGFPPTRAEIAAELGFSSPNAAEEHLRALARKGVIELAAGASRGIRLLGIDDAPHQFTLPHAGLMQLSLPLVGRVAAGSPILAQEHISQHYACDPALFTSKPDYLLKVRGLSMRDAGILDGDLLAVQKRTEAKDGQIIVARLGDDVTVKRLMRRPGGLELIAENPDYENIFVKAGSADFALEGIAVGLIRSGEL</sequence>
<evidence type="ECO:0000255" key="1">
    <source>
        <dbReference type="HAMAP-Rule" id="MF_00015"/>
    </source>
</evidence>
<dbReference type="EC" id="3.4.21.88" evidence="1"/>
<dbReference type="EMBL" id="CP000378">
    <property type="protein sequence ID" value="ABF76027.1"/>
    <property type="molecule type" value="Genomic_DNA"/>
</dbReference>
<dbReference type="SMR" id="Q1BWH8"/>
<dbReference type="MEROPS" id="S24.001"/>
<dbReference type="HOGENOM" id="CLU_066192_45_3_4"/>
<dbReference type="GO" id="GO:0003677">
    <property type="term" value="F:DNA binding"/>
    <property type="evidence" value="ECO:0007669"/>
    <property type="project" value="UniProtKB-UniRule"/>
</dbReference>
<dbReference type="GO" id="GO:0004252">
    <property type="term" value="F:serine-type endopeptidase activity"/>
    <property type="evidence" value="ECO:0007669"/>
    <property type="project" value="UniProtKB-UniRule"/>
</dbReference>
<dbReference type="GO" id="GO:0006281">
    <property type="term" value="P:DNA repair"/>
    <property type="evidence" value="ECO:0007669"/>
    <property type="project" value="UniProtKB-UniRule"/>
</dbReference>
<dbReference type="GO" id="GO:0006260">
    <property type="term" value="P:DNA replication"/>
    <property type="evidence" value="ECO:0007669"/>
    <property type="project" value="UniProtKB-UniRule"/>
</dbReference>
<dbReference type="GO" id="GO:0045892">
    <property type="term" value="P:negative regulation of DNA-templated transcription"/>
    <property type="evidence" value="ECO:0007669"/>
    <property type="project" value="UniProtKB-UniRule"/>
</dbReference>
<dbReference type="GO" id="GO:0006508">
    <property type="term" value="P:proteolysis"/>
    <property type="evidence" value="ECO:0007669"/>
    <property type="project" value="InterPro"/>
</dbReference>
<dbReference type="GO" id="GO:0009432">
    <property type="term" value="P:SOS response"/>
    <property type="evidence" value="ECO:0007669"/>
    <property type="project" value="UniProtKB-UniRule"/>
</dbReference>
<dbReference type="CDD" id="cd06529">
    <property type="entry name" value="S24_LexA-like"/>
    <property type="match status" value="1"/>
</dbReference>
<dbReference type="FunFam" id="1.10.10.10:FF:000009">
    <property type="entry name" value="LexA repressor"/>
    <property type="match status" value="1"/>
</dbReference>
<dbReference type="FunFam" id="2.10.109.10:FF:000001">
    <property type="entry name" value="LexA repressor"/>
    <property type="match status" value="1"/>
</dbReference>
<dbReference type="Gene3D" id="2.10.109.10">
    <property type="entry name" value="Umud Fragment, subunit A"/>
    <property type="match status" value="1"/>
</dbReference>
<dbReference type="Gene3D" id="1.10.10.10">
    <property type="entry name" value="Winged helix-like DNA-binding domain superfamily/Winged helix DNA-binding domain"/>
    <property type="match status" value="1"/>
</dbReference>
<dbReference type="HAMAP" id="MF_00015">
    <property type="entry name" value="LexA"/>
    <property type="match status" value="1"/>
</dbReference>
<dbReference type="InterPro" id="IPR006200">
    <property type="entry name" value="LexA"/>
</dbReference>
<dbReference type="InterPro" id="IPR039418">
    <property type="entry name" value="LexA-like"/>
</dbReference>
<dbReference type="InterPro" id="IPR036286">
    <property type="entry name" value="LexA/Signal_pep-like_sf"/>
</dbReference>
<dbReference type="InterPro" id="IPR006199">
    <property type="entry name" value="LexA_DNA-bd_dom"/>
</dbReference>
<dbReference type="InterPro" id="IPR050077">
    <property type="entry name" value="LexA_repressor"/>
</dbReference>
<dbReference type="InterPro" id="IPR006197">
    <property type="entry name" value="Peptidase_S24_LexA"/>
</dbReference>
<dbReference type="InterPro" id="IPR015927">
    <property type="entry name" value="Peptidase_S24_S26A/B/C"/>
</dbReference>
<dbReference type="InterPro" id="IPR036388">
    <property type="entry name" value="WH-like_DNA-bd_sf"/>
</dbReference>
<dbReference type="InterPro" id="IPR036390">
    <property type="entry name" value="WH_DNA-bd_sf"/>
</dbReference>
<dbReference type="NCBIfam" id="TIGR00498">
    <property type="entry name" value="lexA"/>
    <property type="match status" value="1"/>
</dbReference>
<dbReference type="PANTHER" id="PTHR33516">
    <property type="entry name" value="LEXA REPRESSOR"/>
    <property type="match status" value="1"/>
</dbReference>
<dbReference type="PANTHER" id="PTHR33516:SF2">
    <property type="entry name" value="LEXA REPRESSOR-RELATED"/>
    <property type="match status" value="1"/>
</dbReference>
<dbReference type="Pfam" id="PF01726">
    <property type="entry name" value="LexA_DNA_bind"/>
    <property type="match status" value="1"/>
</dbReference>
<dbReference type="Pfam" id="PF00717">
    <property type="entry name" value="Peptidase_S24"/>
    <property type="match status" value="1"/>
</dbReference>
<dbReference type="PRINTS" id="PR00726">
    <property type="entry name" value="LEXASERPTASE"/>
</dbReference>
<dbReference type="SUPFAM" id="SSF51306">
    <property type="entry name" value="LexA/Signal peptidase"/>
    <property type="match status" value="1"/>
</dbReference>
<dbReference type="SUPFAM" id="SSF46785">
    <property type="entry name" value="Winged helix' DNA-binding domain"/>
    <property type="match status" value="1"/>
</dbReference>
<keyword id="KW-0068">Autocatalytic cleavage</keyword>
<keyword id="KW-0227">DNA damage</keyword>
<keyword id="KW-0234">DNA repair</keyword>
<keyword id="KW-0235">DNA replication</keyword>
<keyword id="KW-0238">DNA-binding</keyword>
<keyword id="KW-0378">Hydrolase</keyword>
<keyword id="KW-0678">Repressor</keyword>
<keyword id="KW-0742">SOS response</keyword>
<keyword id="KW-0804">Transcription</keyword>
<keyword id="KW-0805">Transcription regulation</keyword>
<protein>
    <recommendedName>
        <fullName evidence="1">LexA repressor</fullName>
        <ecNumber evidence="1">3.4.21.88</ecNumber>
    </recommendedName>
</protein>
<reference key="1">
    <citation type="submission" date="2006-05" db="EMBL/GenBank/DDBJ databases">
        <title>Complete sequence of chromosome 1 of Burkholderia cenocepacia AU 1054.</title>
        <authorList>
            <consortium name="US DOE Joint Genome Institute"/>
            <person name="Copeland A."/>
            <person name="Lucas S."/>
            <person name="Lapidus A."/>
            <person name="Barry K."/>
            <person name="Detter J.C."/>
            <person name="Glavina del Rio T."/>
            <person name="Hammon N."/>
            <person name="Israni S."/>
            <person name="Dalin E."/>
            <person name="Tice H."/>
            <person name="Pitluck S."/>
            <person name="Chain P."/>
            <person name="Malfatti S."/>
            <person name="Shin M."/>
            <person name="Vergez L."/>
            <person name="Schmutz J."/>
            <person name="Larimer F."/>
            <person name="Land M."/>
            <person name="Hauser L."/>
            <person name="Kyrpides N."/>
            <person name="Lykidis A."/>
            <person name="LiPuma J.J."/>
            <person name="Konstantinidis K."/>
            <person name="Tiedje J.M."/>
            <person name="Richardson P."/>
        </authorList>
    </citation>
    <scope>NUCLEOTIDE SEQUENCE [LARGE SCALE GENOMIC DNA]</scope>
    <source>
        <strain>AU 1054</strain>
    </source>
</reference>
<comment type="function">
    <text evidence="1">Represses a number of genes involved in the response to DNA damage (SOS response), including recA and lexA. In the presence of single-stranded DNA, RecA interacts with LexA causing an autocatalytic cleavage which disrupts the DNA-binding part of LexA, leading to derepression of the SOS regulon and eventually DNA repair.</text>
</comment>
<comment type="catalytic activity">
    <reaction evidence="1">
        <text>Hydrolysis of Ala-|-Gly bond in repressor LexA.</text>
        <dbReference type="EC" id="3.4.21.88"/>
    </reaction>
</comment>
<comment type="subunit">
    <text evidence="1">Homodimer.</text>
</comment>
<comment type="similarity">
    <text evidence="1">Belongs to the peptidase S24 family.</text>
</comment>
<accession>Q1BWH8</accession>
<name>LEXA_BURO1</name>